<comment type="function">
    <text evidence="2 3 4 5 9">Component of the small ribosomal subunit (PubMed:23873042, PubMed:25601755, PubMed:26245381, PubMed:27863242, PubMed:30517857). The ribosome is a large ribonucleoprotein complex responsible for the synthesis of proteins in the cell (PubMed:23873042, PubMed:25601755, PubMed:26245381, PubMed:27863242, PubMed:30517857).</text>
</comment>
<comment type="subunit">
    <text evidence="2 3 4 5 6 7 8 9 10 11 12 13 14 15 16 17">Component of the small ribosomal subunit.</text>
</comment>
<comment type="subcellular location">
    <subcellularLocation>
        <location evidence="2 3 4 5 6 7 8 9 10 11 12 13 14 15 16 17">Cytoplasm</location>
    </subcellularLocation>
</comment>
<comment type="similarity">
    <text evidence="18">Belongs to the universal ribosomal protein uS13 family.</text>
</comment>
<name>RS18_RABIT</name>
<sequence>MSLVIPEKFQHILRVLNTNIDGRRKIAFAITAIKGVGRRYAHVVLRKADIDLTKRAGELTEDEVERVITIMQNPRQYKIPDWFLNRQKDVKDGKYSQVLANGLDNKLREDLERLKKIRAHRGLRHFWGLRVRGQHTKTTGRRGRTVGVSKKK</sequence>
<accession>G1TPG3</accession>
<accession>G1SZI5</accession>
<gene>
    <name type="primary">RPS18</name>
</gene>
<protein>
    <recommendedName>
        <fullName>Small ribosomal subunit protein uS13</fullName>
    </recommendedName>
    <alternativeName>
        <fullName>40S ribosomal protein S18</fullName>
    </alternativeName>
</protein>
<proteinExistence type="evidence at protein level"/>
<dbReference type="EMBL" id="AAGW02017742">
    <property type="status" value="NOT_ANNOTATED_CDS"/>
    <property type="molecule type" value="Genomic_DNA"/>
</dbReference>
<dbReference type="RefSeq" id="XP_002714578.1">
    <property type="nucleotide sequence ID" value="XM_002714532.5"/>
</dbReference>
<dbReference type="RefSeq" id="XP_017200532.1">
    <property type="nucleotide sequence ID" value="XM_017345043.1"/>
</dbReference>
<dbReference type="PDB" id="3JAG">
    <property type="method" value="EM"/>
    <property type="resolution" value="3.65 A"/>
    <property type="chains" value="SS=10-146"/>
</dbReference>
<dbReference type="PDB" id="3JAH">
    <property type="method" value="EM"/>
    <property type="resolution" value="3.45 A"/>
    <property type="chains" value="SS=10-146"/>
</dbReference>
<dbReference type="PDB" id="3JAI">
    <property type="method" value="EM"/>
    <property type="resolution" value="3.65 A"/>
    <property type="chains" value="SS=10-146"/>
</dbReference>
<dbReference type="PDB" id="4D5L">
    <property type="method" value="EM"/>
    <property type="resolution" value="9.00 A"/>
    <property type="chains" value="S=1-152"/>
</dbReference>
<dbReference type="PDB" id="4D61">
    <property type="method" value="EM"/>
    <property type="resolution" value="9.00 A"/>
    <property type="chains" value="S=1-152"/>
</dbReference>
<dbReference type="PDB" id="4KZX">
    <property type="method" value="X-ray"/>
    <property type="resolution" value="7.81 A"/>
    <property type="chains" value="S=1-152"/>
</dbReference>
<dbReference type="PDB" id="4KZY">
    <property type="method" value="X-ray"/>
    <property type="resolution" value="7.01 A"/>
    <property type="chains" value="S=1-152"/>
</dbReference>
<dbReference type="PDB" id="4KZZ">
    <property type="method" value="X-ray"/>
    <property type="resolution" value="7.03 A"/>
    <property type="chains" value="S=1-152"/>
</dbReference>
<dbReference type="PDB" id="5K0Y">
    <property type="method" value="EM"/>
    <property type="resolution" value="5.80 A"/>
    <property type="chains" value="L=6-142"/>
</dbReference>
<dbReference type="PDB" id="5LZS">
    <property type="method" value="EM"/>
    <property type="resolution" value="3.31 A"/>
    <property type="chains" value="SS=1-152"/>
</dbReference>
<dbReference type="PDB" id="5LZT">
    <property type="method" value="EM"/>
    <property type="resolution" value="3.65 A"/>
    <property type="chains" value="SS=1-152"/>
</dbReference>
<dbReference type="PDB" id="5LZU">
    <property type="method" value="EM"/>
    <property type="resolution" value="3.75 A"/>
    <property type="chains" value="SS=1-152"/>
</dbReference>
<dbReference type="PDB" id="5LZV">
    <property type="method" value="EM"/>
    <property type="resolution" value="3.35 A"/>
    <property type="chains" value="SS=1-152"/>
</dbReference>
<dbReference type="PDB" id="5LZW">
    <property type="method" value="EM"/>
    <property type="resolution" value="3.53 A"/>
    <property type="chains" value="SS=1-152"/>
</dbReference>
<dbReference type="PDB" id="5LZX">
    <property type="method" value="EM"/>
    <property type="resolution" value="3.67 A"/>
    <property type="chains" value="SS=1-152"/>
</dbReference>
<dbReference type="PDB" id="5LZY">
    <property type="method" value="EM"/>
    <property type="resolution" value="3.99 A"/>
    <property type="chains" value="SS=1-152"/>
</dbReference>
<dbReference type="PDB" id="5LZZ">
    <property type="method" value="EM"/>
    <property type="resolution" value="3.47 A"/>
    <property type="chains" value="SS=1-152"/>
</dbReference>
<dbReference type="PDB" id="6D90">
    <property type="method" value="EM"/>
    <property type="resolution" value="3.20 A"/>
    <property type="chains" value="TT=1-152"/>
</dbReference>
<dbReference type="PDB" id="6D9J">
    <property type="method" value="EM"/>
    <property type="resolution" value="3.20 A"/>
    <property type="chains" value="TT=1-152"/>
</dbReference>
<dbReference type="PDB" id="6GZ3">
    <property type="method" value="EM"/>
    <property type="resolution" value="3.60 A"/>
    <property type="chains" value="BS=4-142"/>
</dbReference>
<dbReference type="PDB" id="6HCF">
    <property type="method" value="EM"/>
    <property type="resolution" value="3.90 A"/>
    <property type="chains" value="T1=1-152"/>
</dbReference>
<dbReference type="PDB" id="6HCJ">
    <property type="method" value="EM"/>
    <property type="resolution" value="3.80 A"/>
    <property type="chains" value="T2=1-152"/>
</dbReference>
<dbReference type="PDB" id="6HCM">
    <property type="method" value="EM"/>
    <property type="resolution" value="6.80 A"/>
    <property type="chains" value="T1=1-152"/>
</dbReference>
<dbReference type="PDB" id="6HCQ">
    <property type="method" value="EM"/>
    <property type="resolution" value="6.50 A"/>
    <property type="chains" value="T2=1-152"/>
</dbReference>
<dbReference type="PDB" id="6MTB">
    <property type="method" value="EM"/>
    <property type="resolution" value="3.60 A"/>
    <property type="chains" value="SS=2-145"/>
</dbReference>
<dbReference type="PDB" id="6MTC">
    <property type="method" value="EM"/>
    <property type="resolution" value="3.40 A"/>
    <property type="chains" value="SS=2-145"/>
</dbReference>
<dbReference type="PDB" id="6MTD">
    <property type="method" value="EM"/>
    <property type="resolution" value="3.30 A"/>
    <property type="chains" value="SS=2-145"/>
</dbReference>
<dbReference type="PDB" id="6MTE">
    <property type="method" value="EM"/>
    <property type="resolution" value="3.40 A"/>
    <property type="chains" value="SS=2-145"/>
</dbReference>
<dbReference type="PDB" id="6P4G">
    <property type="method" value="EM"/>
    <property type="resolution" value="3.10 A"/>
    <property type="chains" value="T=1-152"/>
</dbReference>
<dbReference type="PDB" id="6P4H">
    <property type="method" value="EM"/>
    <property type="resolution" value="3.20 A"/>
    <property type="chains" value="T=1-152"/>
</dbReference>
<dbReference type="PDB" id="6P5I">
    <property type="method" value="EM"/>
    <property type="resolution" value="3.10 A"/>
    <property type="chains" value="T=1-152"/>
</dbReference>
<dbReference type="PDB" id="6P5J">
    <property type="method" value="EM"/>
    <property type="resolution" value="3.10 A"/>
    <property type="chains" value="T=1-152"/>
</dbReference>
<dbReference type="PDB" id="6P5K">
    <property type="method" value="EM"/>
    <property type="resolution" value="3.10 A"/>
    <property type="chains" value="T=1-152"/>
</dbReference>
<dbReference type="PDB" id="6P5N">
    <property type="method" value="EM"/>
    <property type="resolution" value="3.20 A"/>
    <property type="chains" value="T=1-152"/>
</dbReference>
<dbReference type="PDB" id="6R5Q">
    <property type="method" value="EM"/>
    <property type="resolution" value="3.00 A"/>
    <property type="chains" value="II=2-145"/>
</dbReference>
<dbReference type="PDB" id="6R6G">
    <property type="method" value="EM"/>
    <property type="resolution" value="3.70 A"/>
    <property type="chains" value="II=2-145"/>
</dbReference>
<dbReference type="PDB" id="6R6P">
    <property type="method" value="EM"/>
    <property type="resolution" value="3.10 A"/>
    <property type="chains" value="II=2-145"/>
</dbReference>
<dbReference type="PDB" id="6R7Q">
    <property type="method" value="EM"/>
    <property type="resolution" value="3.90 A"/>
    <property type="chains" value="II=2-145"/>
</dbReference>
<dbReference type="PDB" id="6SGC">
    <property type="method" value="EM"/>
    <property type="resolution" value="2.80 A"/>
    <property type="chains" value="T1=1-152"/>
</dbReference>
<dbReference type="PDB" id="6W2S">
    <property type="method" value="EM"/>
    <property type="resolution" value="3.00 A"/>
    <property type="chains" value="T=1-152"/>
</dbReference>
<dbReference type="PDB" id="6W2T">
    <property type="method" value="EM"/>
    <property type="resolution" value="3.36 A"/>
    <property type="chains" value="T=1-152"/>
</dbReference>
<dbReference type="PDB" id="6YAL">
    <property type="method" value="EM"/>
    <property type="resolution" value="3.00 A"/>
    <property type="chains" value="U=1-152"/>
</dbReference>
<dbReference type="PDB" id="6YAM">
    <property type="method" value="EM"/>
    <property type="resolution" value="3.60 A"/>
    <property type="chains" value="U=1-152"/>
</dbReference>
<dbReference type="PDB" id="6YAN">
    <property type="method" value="EM"/>
    <property type="resolution" value="3.48 A"/>
    <property type="chains" value="U=6-147"/>
</dbReference>
<dbReference type="PDB" id="6ZVK">
    <property type="method" value="EM"/>
    <property type="resolution" value="3.49 A"/>
    <property type="chains" value="G5=6-142"/>
</dbReference>
<dbReference type="PDB" id="7A01">
    <property type="method" value="EM"/>
    <property type="resolution" value="3.60 A"/>
    <property type="chains" value="G5=6-142"/>
</dbReference>
<dbReference type="PDB" id="7JQB">
    <property type="method" value="EM"/>
    <property type="resolution" value="2.70 A"/>
    <property type="chains" value="T=1-152"/>
</dbReference>
<dbReference type="PDB" id="7JQC">
    <property type="method" value="EM"/>
    <property type="resolution" value="3.30 A"/>
    <property type="chains" value="T=1-152"/>
</dbReference>
<dbReference type="PDB" id="7MDZ">
    <property type="method" value="EM"/>
    <property type="resolution" value="3.20 A"/>
    <property type="chains" value="SS=1-152"/>
</dbReference>
<dbReference type="PDB" id="7NWG">
    <property type="method" value="EM"/>
    <property type="resolution" value="3.80 A"/>
    <property type="chains" value="T2=1-152"/>
</dbReference>
<dbReference type="PDB" id="7NWH">
    <property type="method" value="EM"/>
    <property type="resolution" value="4.10 A"/>
    <property type="chains" value="SS=1-152"/>
</dbReference>
<dbReference type="PDB" id="7NWI">
    <property type="method" value="EM"/>
    <property type="resolution" value="3.13 A"/>
    <property type="chains" value="SS=6-142"/>
</dbReference>
<dbReference type="PDB" id="7O7Y">
    <property type="method" value="EM"/>
    <property type="resolution" value="2.20 A"/>
    <property type="chains" value="Ar=1-152"/>
</dbReference>
<dbReference type="PDB" id="7O7Z">
    <property type="method" value="EM"/>
    <property type="resolution" value="2.40 A"/>
    <property type="chains" value="Ar=1-152"/>
</dbReference>
<dbReference type="PDB" id="7O80">
    <property type="method" value="EM"/>
    <property type="resolution" value="2.90 A"/>
    <property type="chains" value="Ar=1-152"/>
</dbReference>
<dbReference type="PDB" id="7O81">
    <property type="method" value="EM"/>
    <property type="resolution" value="3.10 A"/>
    <property type="chains" value="Ar=1-152"/>
</dbReference>
<dbReference type="PDB" id="7OYD">
    <property type="method" value="EM"/>
    <property type="resolution" value="2.30 A"/>
    <property type="chains" value="SS=1-152"/>
</dbReference>
<dbReference type="PDB" id="7SYG">
    <property type="method" value="EM"/>
    <property type="resolution" value="4.30 A"/>
    <property type="chains" value="T=1-152"/>
</dbReference>
<dbReference type="PDB" id="7SYH">
    <property type="method" value="EM"/>
    <property type="resolution" value="4.60 A"/>
    <property type="chains" value="T=1-152"/>
</dbReference>
<dbReference type="PDB" id="7SYI">
    <property type="method" value="EM"/>
    <property type="resolution" value="4.50 A"/>
    <property type="chains" value="T=1-152"/>
</dbReference>
<dbReference type="PDB" id="7SYJ">
    <property type="method" value="EM"/>
    <property type="resolution" value="4.80 A"/>
    <property type="chains" value="T=1-152"/>
</dbReference>
<dbReference type="PDB" id="7SYK">
    <property type="method" value="EM"/>
    <property type="resolution" value="4.20 A"/>
    <property type="chains" value="T=1-152"/>
</dbReference>
<dbReference type="PDB" id="7SYL">
    <property type="method" value="EM"/>
    <property type="resolution" value="4.50 A"/>
    <property type="chains" value="T=1-152"/>
</dbReference>
<dbReference type="PDB" id="7SYM">
    <property type="method" value="EM"/>
    <property type="resolution" value="4.80 A"/>
    <property type="chains" value="T=1-152"/>
</dbReference>
<dbReference type="PDB" id="7SYN">
    <property type="method" value="EM"/>
    <property type="resolution" value="4.00 A"/>
    <property type="chains" value="T=1-152"/>
</dbReference>
<dbReference type="PDB" id="7SYO">
    <property type="method" value="EM"/>
    <property type="resolution" value="4.60 A"/>
    <property type="chains" value="T=1-152"/>
</dbReference>
<dbReference type="PDB" id="7SYP">
    <property type="method" value="EM"/>
    <property type="resolution" value="4.00 A"/>
    <property type="chains" value="T=1-152"/>
</dbReference>
<dbReference type="PDB" id="7SYQ">
    <property type="method" value="EM"/>
    <property type="resolution" value="3.80 A"/>
    <property type="chains" value="T=1-152"/>
</dbReference>
<dbReference type="PDB" id="7SYR">
    <property type="method" value="EM"/>
    <property type="resolution" value="3.60 A"/>
    <property type="chains" value="T=1-152"/>
</dbReference>
<dbReference type="PDB" id="7SYS">
    <property type="method" value="EM"/>
    <property type="resolution" value="3.50 A"/>
    <property type="chains" value="T=1-152"/>
</dbReference>
<dbReference type="PDB" id="7SYT">
    <property type="method" value="EM"/>
    <property type="resolution" value="4.40 A"/>
    <property type="chains" value="T=1-152"/>
</dbReference>
<dbReference type="PDB" id="7SYU">
    <property type="method" value="EM"/>
    <property type="resolution" value="4.60 A"/>
    <property type="chains" value="T=1-152"/>
</dbReference>
<dbReference type="PDB" id="7SYV">
    <property type="method" value="EM"/>
    <property type="resolution" value="3.90 A"/>
    <property type="chains" value="T=1-152"/>
</dbReference>
<dbReference type="PDB" id="7SYW">
    <property type="method" value="EM"/>
    <property type="resolution" value="3.70 A"/>
    <property type="chains" value="T=1-152"/>
</dbReference>
<dbReference type="PDB" id="7SYX">
    <property type="method" value="EM"/>
    <property type="resolution" value="3.70 A"/>
    <property type="chains" value="T=1-152"/>
</dbReference>
<dbReference type="PDB" id="7TOQ">
    <property type="method" value="EM"/>
    <property type="resolution" value="3.10 A"/>
    <property type="chains" value="AS18=2-145"/>
</dbReference>
<dbReference type="PDB" id="7TOR">
    <property type="method" value="EM"/>
    <property type="resolution" value="2.90 A"/>
    <property type="chains" value="AS18=2-145"/>
</dbReference>
<dbReference type="PDB" id="7UCJ">
    <property type="method" value="EM"/>
    <property type="resolution" value="3.10 A"/>
    <property type="chains" value="SS=2-145"/>
</dbReference>
<dbReference type="PDB" id="7UCK">
    <property type="method" value="EM"/>
    <property type="resolution" value="2.80 A"/>
    <property type="chains" value="SS=2-145"/>
</dbReference>
<dbReference type="PDB" id="8BHF">
    <property type="method" value="EM"/>
    <property type="resolution" value="3.10 A"/>
    <property type="chains" value="T3=6-149"/>
</dbReference>
<dbReference type="PDB" id="8BTK">
    <property type="method" value="EM"/>
    <property type="resolution" value="3.50 A"/>
    <property type="chains" value="Ar=1-152"/>
</dbReference>
<dbReference type="PDB" id="8P03">
    <property type="method" value="EM"/>
    <property type="resolution" value="3.04 A"/>
    <property type="chains" value="U=1-152"/>
</dbReference>
<dbReference type="PDB" id="8P09">
    <property type="method" value="EM"/>
    <property type="resolution" value="3.30 A"/>
    <property type="chains" value="U=1-152"/>
</dbReference>
<dbReference type="PDB" id="8P2K">
    <property type="method" value="EM"/>
    <property type="resolution" value="2.90 A"/>
    <property type="chains" value="Ar=1-152"/>
</dbReference>
<dbReference type="PDB" id="8Q7Z">
    <property type="method" value="EM"/>
    <property type="resolution" value="2.50 A"/>
    <property type="chains" value="Ar=1-152"/>
</dbReference>
<dbReference type="PDB" id="8Q87">
    <property type="method" value="EM"/>
    <property type="resolution" value="2.40 A"/>
    <property type="chains" value="Ar=1-152"/>
</dbReference>
<dbReference type="PDB" id="8SCB">
    <property type="method" value="EM"/>
    <property type="resolution" value="2.50 A"/>
    <property type="chains" value="SS=1-152"/>
</dbReference>
<dbReference type="PDB" id="8VFT">
    <property type="method" value="EM"/>
    <property type="resolution" value="3.30 A"/>
    <property type="chains" value="SS=1-152"/>
</dbReference>
<dbReference type="PDB" id="9BDL">
    <property type="method" value="EM"/>
    <property type="resolution" value="2.80 A"/>
    <property type="chains" value="AS18=2-145"/>
</dbReference>
<dbReference type="PDB" id="9BDN">
    <property type="method" value="EM"/>
    <property type="resolution" value="3.10 A"/>
    <property type="chains" value="AS18=2-145"/>
</dbReference>
<dbReference type="PDB" id="9BDP">
    <property type="method" value="EM"/>
    <property type="resolution" value="3.70 A"/>
    <property type="chains" value="AS18=2-145"/>
</dbReference>
<dbReference type="PDB" id="9C8K">
    <property type="method" value="EM"/>
    <property type="resolution" value="3.10 A"/>
    <property type="chains" value="S=1-152"/>
</dbReference>
<dbReference type="PDB" id="9F1B">
    <property type="method" value="EM"/>
    <property type="resolution" value="3.01 A"/>
    <property type="chains" value="Ar=1-152"/>
</dbReference>
<dbReference type="PDB" id="9F1C">
    <property type="method" value="EM"/>
    <property type="resolution" value="3.78 A"/>
    <property type="chains" value="Ar=1-152"/>
</dbReference>
<dbReference type="PDB" id="9F1D">
    <property type="method" value="EM"/>
    <property type="resolution" value="3.26 A"/>
    <property type="chains" value="Ar=1-152"/>
</dbReference>
<dbReference type="PDBsum" id="3JAG"/>
<dbReference type="PDBsum" id="3JAH"/>
<dbReference type="PDBsum" id="3JAI"/>
<dbReference type="PDBsum" id="4D5L"/>
<dbReference type="PDBsum" id="4D61"/>
<dbReference type="PDBsum" id="4KZX"/>
<dbReference type="PDBsum" id="4KZY"/>
<dbReference type="PDBsum" id="4KZZ"/>
<dbReference type="PDBsum" id="5K0Y"/>
<dbReference type="PDBsum" id="5LZS"/>
<dbReference type="PDBsum" id="5LZT"/>
<dbReference type="PDBsum" id="5LZU"/>
<dbReference type="PDBsum" id="5LZV"/>
<dbReference type="PDBsum" id="5LZW"/>
<dbReference type="PDBsum" id="5LZX"/>
<dbReference type="PDBsum" id="5LZY"/>
<dbReference type="PDBsum" id="5LZZ"/>
<dbReference type="PDBsum" id="6D90"/>
<dbReference type="PDBsum" id="6D9J"/>
<dbReference type="PDBsum" id="6GZ3"/>
<dbReference type="PDBsum" id="6HCF"/>
<dbReference type="PDBsum" id="6HCJ"/>
<dbReference type="PDBsum" id="6HCM"/>
<dbReference type="PDBsum" id="6HCQ"/>
<dbReference type="PDBsum" id="6MTB"/>
<dbReference type="PDBsum" id="6MTC"/>
<dbReference type="PDBsum" id="6MTD"/>
<dbReference type="PDBsum" id="6MTE"/>
<dbReference type="PDBsum" id="6P4G"/>
<dbReference type="PDBsum" id="6P4H"/>
<dbReference type="PDBsum" id="6P5I"/>
<dbReference type="PDBsum" id="6P5J"/>
<dbReference type="PDBsum" id="6P5K"/>
<dbReference type="PDBsum" id="6P5N"/>
<dbReference type="PDBsum" id="6R5Q"/>
<dbReference type="PDBsum" id="6R6G"/>
<dbReference type="PDBsum" id="6R6P"/>
<dbReference type="PDBsum" id="6R7Q"/>
<dbReference type="PDBsum" id="6SGC"/>
<dbReference type="PDBsum" id="6W2S"/>
<dbReference type="PDBsum" id="6W2T"/>
<dbReference type="PDBsum" id="6YAL"/>
<dbReference type="PDBsum" id="6YAM"/>
<dbReference type="PDBsum" id="6YAN"/>
<dbReference type="PDBsum" id="6ZVK"/>
<dbReference type="PDBsum" id="7A01"/>
<dbReference type="PDBsum" id="7JQB"/>
<dbReference type="PDBsum" id="7JQC"/>
<dbReference type="PDBsum" id="7MDZ"/>
<dbReference type="PDBsum" id="7NWG"/>
<dbReference type="PDBsum" id="7NWH"/>
<dbReference type="PDBsum" id="7NWI"/>
<dbReference type="PDBsum" id="7O7Y"/>
<dbReference type="PDBsum" id="7O7Z"/>
<dbReference type="PDBsum" id="7O80"/>
<dbReference type="PDBsum" id="7O81"/>
<dbReference type="PDBsum" id="7OYD"/>
<dbReference type="PDBsum" id="7SYG"/>
<dbReference type="PDBsum" id="7SYH"/>
<dbReference type="PDBsum" id="7SYI"/>
<dbReference type="PDBsum" id="7SYJ"/>
<dbReference type="PDBsum" id="7SYK"/>
<dbReference type="PDBsum" id="7SYL"/>
<dbReference type="PDBsum" id="7SYM"/>
<dbReference type="PDBsum" id="7SYN"/>
<dbReference type="PDBsum" id="7SYO"/>
<dbReference type="PDBsum" id="7SYP"/>
<dbReference type="PDBsum" id="7SYQ"/>
<dbReference type="PDBsum" id="7SYR"/>
<dbReference type="PDBsum" id="7SYS"/>
<dbReference type="PDBsum" id="7SYT"/>
<dbReference type="PDBsum" id="7SYU"/>
<dbReference type="PDBsum" id="7SYV"/>
<dbReference type="PDBsum" id="7SYW"/>
<dbReference type="PDBsum" id="7SYX"/>
<dbReference type="PDBsum" id="7TOQ"/>
<dbReference type="PDBsum" id="7TOR"/>
<dbReference type="PDBsum" id="7UCJ"/>
<dbReference type="PDBsum" id="7UCK"/>
<dbReference type="PDBsum" id="8BHF"/>
<dbReference type="PDBsum" id="8BTK"/>
<dbReference type="PDBsum" id="8P03"/>
<dbReference type="PDBsum" id="8P09"/>
<dbReference type="PDBsum" id="8P2K"/>
<dbReference type="PDBsum" id="8Q7Z"/>
<dbReference type="PDBsum" id="8Q87"/>
<dbReference type="PDBsum" id="8SCB"/>
<dbReference type="PDBsum" id="8VFT"/>
<dbReference type="PDBsum" id="9BDL"/>
<dbReference type="PDBsum" id="9BDN"/>
<dbReference type="PDBsum" id="9BDP"/>
<dbReference type="PDBsum" id="9C8K"/>
<dbReference type="PDBsum" id="9F1B"/>
<dbReference type="PDBsum" id="9F1C"/>
<dbReference type="PDBsum" id="9F1D"/>
<dbReference type="EMDB" id="EMD-0098"/>
<dbReference type="EMDB" id="EMD-0099"/>
<dbReference type="EMDB" id="EMD-0100"/>
<dbReference type="EMDB" id="EMD-0192"/>
<dbReference type="EMDB" id="EMD-0194"/>
<dbReference type="EMDB" id="EMD-0195"/>
<dbReference type="EMDB" id="EMD-0197"/>
<dbReference type="EMDB" id="EMD-10181"/>
<dbReference type="EMDB" id="EMD-10760"/>
<dbReference type="EMDB" id="EMD-10761"/>
<dbReference type="EMDB" id="EMD-10762"/>
<dbReference type="EMDB" id="EMD-11459"/>
<dbReference type="EMDB" id="EMD-11590"/>
<dbReference type="EMDB" id="EMD-12631"/>
<dbReference type="EMDB" id="EMD-12632"/>
<dbReference type="EMDB" id="EMD-12633"/>
<dbReference type="EMDB" id="EMD-12756"/>
<dbReference type="EMDB" id="EMD-12757"/>
<dbReference type="EMDB" id="EMD-12758"/>
<dbReference type="EMDB" id="EMD-12759"/>
<dbReference type="EMDB" id="EMD-13114"/>
<dbReference type="EMDB" id="EMD-16052"/>
<dbReference type="EMDB" id="EMD-16232"/>
<dbReference type="EMDB" id="EMD-17329"/>
<dbReference type="EMDB" id="EMD-17330"/>
<dbReference type="EMDB" id="EMD-17367"/>
<dbReference type="EMDB" id="EMD-20248"/>
<dbReference type="EMDB" id="EMD-20249"/>
<dbReference type="EMDB" id="EMD-20255"/>
<dbReference type="EMDB" id="EMD-20256"/>
<dbReference type="EMDB" id="EMD-20257"/>
<dbReference type="EMDB" id="EMD-20258"/>
<dbReference type="EMDB" id="EMD-21529"/>
<dbReference type="EMDB" id="EMD-21530"/>
<dbReference type="EMDB" id="EMD-22432"/>
<dbReference type="EMDB" id="EMD-22433"/>
<dbReference type="EMDB" id="EMD-23785"/>
<dbReference type="EMDB" id="EMD-25527"/>
<dbReference type="EMDB" id="EMD-25528"/>
<dbReference type="EMDB" id="EMD-25529"/>
<dbReference type="EMDB" id="EMD-25530"/>
<dbReference type="EMDB" id="EMD-25531"/>
<dbReference type="EMDB" id="EMD-25532"/>
<dbReference type="EMDB" id="EMD-25533"/>
<dbReference type="EMDB" id="EMD-25534"/>
<dbReference type="EMDB" id="EMD-25535"/>
<dbReference type="EMDB" id="EMD-25536"/>
<dbReference type="EMDB" id="EMD-25537"/>
<dbReference type="EMDB" id="EMD-25538"/>
<dbReference type="EMDB" id="EMD-25539"/>
<dbReference type="EMDB" id="EMD-25540"/>
<dbReference type="EMDB" id="EMD-25541"/>
<dbReference type="EMDB" id="EMD-25542"/>
<dbReference type="EMDB" id="EMD-25543"/>
<dbReference type="EMDB" id="EMD-25544"/>
<dbReference type="EMDB" id="EMD-26035"/>
<dbReference type="EMDB" id="EMD-26036"/>
<dbReference type="EMDB" id="EMD-26444"/>
<dbReference type="EMDB" id="EMD-26445"/>
<dbReference type="EMDB" id="EMD-40344"/>
<dbReference type="EMDB" id="EMD-4130"/>
<dbReference type="EMDB" id="EMD-4131"/>
<dbReference type="EMDB" id="EMD-4132"/>
<dbReference type="EMDB" id="EMD-4133"/>
<dbReference type="EMDB" id="EMD-4134"/>
<dbReference type="EMDB" id="EMD-4135"/>
<dbReference type="EMDB" id="EMD-4136"/>
<dbReference type="EMDB" id="EMD-4137"/>
<dbReference type="EMDB" id="EMD-43189"/>
<dbReference type="EMDB" id="EMD-44461"/>
<dbReference type="EMDB" id="EMD-44463"/>
<dbReference type="EMDB" id="EMD-44464"/>
<dbReference type="EMDB" id="EMD-45307"/>
<dbReference type="EMDB" id="EMD-4729"/>
<dbReference type="EMDB" id="EMD-4735"/>
<dbReference type="EMDB" id="EMD-4737"/>
<dbReference type="EMDB" id="EMD-4745"/>
<dbReference type="EMDB" id="EMD-50124"/>
<dbReference type="EMDB" id="EMD-50125"/>
<dbReference type="EMDB" id="EMD-50126"/>
<dbReference type="EMDB" id="EMD-7834"/>
<dbReference type="EMDB" id="EMD-7836"/>
<dbReference type="EMDB" id="EMD-8190"/>
<dbReference type="EMDB" id="EMD-9237"/>
<dbReference type="EMDB" id="EMD-9239"/>
<dbReference type="EMDB" id="EMD-9240"/>
<dbReference type="EMDB" id="EMD-9242"/>
<dbReference type="SMR" id="G1TPG3"/>
<dbReference type="IntAct" id="G1TPG3">
    <property type="interactions" value="1"/>
</dbReference>
<dbReference type="PaxDb" id="9986-ENSOCUP00000018898"/>
<dbReference type="Ensembl" id="ENSOCUT00000014693.3">
    <property type="protein sequence ID" value="ENSOCUP00000018898.1"/>
    <property type="gene ID" value="ENSOCUG00000014699.3"/>
</dbReference>
<dbReference type="Ensembl" id="ENSOCUT00000052459.1">
    <property type="protein sequence ID" value="ENSOCUP00000028190.1"/>
    <property type="gene ID" value="ENSOCUG00000010546.3"/>
</dbReference>
<dbReference type="GeneID" id="100349921"/>
<dbReference type="KEGG" id="ocu:100349921"/>
<dbReference type="KEGG" id="ocu:100356144"/>
<dbReference type="CTD" id="6222"/>
<dbReference type="eggNOG" id="KOG3311">
    <property type="taxonomic scope" value="Eukaryota"/>
</dbReference>
<dbReference type="GeneTree" id="ENSGT00390000012691"/>
<dbReference type="HOGENOM" id="CLU_103849_0_1_1"/>
<dbReference type="OMA" id="SYKGVRH"/>
<dbReference type="OrthoDB" id="1702480at2759"/>
<dbReference type="TreeFam" id="TF317649"/>
<dbReference type="EvolutionaryTrace" id="G1TPG3"/>
<dbReference type="Proteomes" id="UP000001811">
    <property type="component" value="Chromosome 12"/>
</dbReference>
<dbReference type="Bgee" id="ENSOCUG00000010546">
    <property type="expression patterns" value="Expressed in upper lobe of left lung and 15 other cell types or tissues"/>
</dbReference>
<dbReference type="GO" id="GO:0022626">
    <property type="term" value="C:cytosolic ribosome"/>
    <property type="evidence" value="ECO:0000314"/>
    <property type="project" value="UniProtKB"/>
</dbReference>
<dbReference type="GO" id="GO:0015935">
    <property type="term" value="C:small ribosomal subunit"/>
    <property type="evidence" value="ECO:0007669"/>
    <property type="project" value="TreeGrafter"/>
</dbReference>
<dbReference type="GO" id="GO:0019843">
    <property type="term" value="F:rRNA binding"/>
    <property type="evidence" value="ECO:0007669"/>
    <property type="project" value="UniProtKB-KW"/>
</dbReference>
<dbReference type="GO" id="GO:0003735">
    <property type="term" value="F:structural constituent of ribosome"/>
    <property type="evidence" value="ECO:0000314"/>
    <property type="project" value="UniProtKB"/>
</dbReference>
<dbReference type="GO" id="GO:0006412">
    <property type="term" value="P:translation"/>
    <property type="evidence" value="ECO:0007669"/>
    <property type="project" value="InterPro"/>
</dbReference>
<dbReference type="FunFam" id="1.10.8.50:FF:000002">
    <property type="entry name" value="40S ribosomal protein S18"/>
    <property type="match status" value="1"/>
</dbReference>
<dbReference type="FunFam" id="4.10.910.10:FF:000002">
    <property type="entry name" value="40S ribosomal protein S18"/>
    <property type="match status" value="1"/>
</dbReference>
<dbReference type="Gene3D" id="1.10.8.50">
    <property type="match status" value="1"/>
</dbReference>
<dbReference type="Gene3D" id="4.10.910.10">
    <property type="entry name" value="30s ribosomal protein s13, domain 2"/>
    <property type="match status" value="1"/>
</dbReference>
<dbReference type="HAMAP" id="MF_01315">
    <property type="entry name" value="Ribosomal_uS13"/>
    <property type="match status" value="1"/>
</dbReference>
<dbReference type="InterPro" id="IPR027437">
    <property type="entry name" value="Rbsml_uS13_C"/>
</dbReference>
<dbReference type="InterPro" id="IPR001892">
    <property type="entry name" value="Ribosomal_uS13"/>
</dbReference>
<dbReference type="InterPro" id="IPR010979">
    <property type="entry name" value="Ribosomal_uS13-like_H2TH"/>
</dbReference>
<dbReference type="InterPro" id="IPR018269">
    <property type="entry name" value="Ribosomal_uS13_CS"/>
</dbReference>
<dbReference type="NCBIfam" id="NF003140">
    <property type="entry name" value="PRK04053.1"/>
    <property type="match status" value="1"/>
</dbReference>
<dbReference type="PANTHER" id="PTHR10871">
    <property type="entry name" value="30S RIBOSOMAL PROTEIN S13/40S RIBOSOMAL PROTEIN S18"/>
    <property type="match status" value="1"/>
</dbReference>
<dbReference type="PANTHER" id="PTHR10871:SF42">
    <property type="entry name" value="SMALL RIBOSOMAL SUBUNIT PROTEIN US13"/>
    <property type="match status" value="1"/>
</dbReference>
<dbReference type="Pfam" id="PF00416">
    <property type="entry name" value="Ribosomal_S13"/>
    <property type="match status" value="1"/>
</dbReference>
<dbReference type="PIRSF" id="PIRSF002134">
    <property type="entry name" value="Ribosomal_S13"/>
    <property type="match status" value="1"/>
</dbReference>
<dbReference type="SUPFAM" id="SSF46946">
    <property type="entry name" value="S13-like H2TH domain"/>
    <property type="match status" value="1"/>
</dbReference>
<dbReference type="PROSITE" id="PS00646">
    <property type="entry name" value="RIBOSOMAL_S13_1"/>
    <property type="match status" value="1"/>
</dbReference>
<dbReference type="PROSITE" id="PS50159">
    <property type="entry name" value="RIBOSOMAL_S13_2"/>
    <property type="match status" value="1"/>
</dbReference>
<feature type="initiator methionine" description="Removed" evidence="1">
    <location>
        <position position="1"/>
    </location>
</feature>
<feature type="chain" id="PRO_0000460071" description="Small ribosomal subunit protein uS13">
    <location>
        <begin position="2"/>
        <end position="152"/>
    </location>
</feature>
<feature type="modified residue" description="N-acetylserine" evidence="1">
    <location>
        <position position="2"/>
    </location>
</feature>
<feature type="modified residue" description="N6-acetyllysine; alternate" evidence="1">
    <location>
        <position position="94"/>
    </location>
</feature>
<feature type="modified residue" description="N6-acetyllysine; alternate" evidence="1">
    <location>
        <position position="106"/>
    </location>
</feature>
<feature type="cross-link" description="Glycyl lysine isopeptide (Lys-Gly) (interchain with G-Cter in SUMO2)" evidence="1">
    <location>
        <position position="91"/>
    </location>
</feature>
<feature type="cross-link" description="Glycyl lysine isopeptide (Lys-Gly) (interchain with G-Cter in SUMO2); alternate" evidence="1">
    <location>
        <position position="94"/>
    </location>
</feature>
<feature type="cross-link" description="Glycyl lysine isopeptide (Lys-Gly) (interchain with G-Cter in SUMO2); alternate" evidence="1">
    <location>
        <position position="106"/>
    </location>
</feature>
<feature type="strand" evidence="49">
    <location>
        <begin position="11"/>
        <end position="15"/>
    </location>
</feature>
<feature type="strand" evidence="49">
    <location>
        <begin position="18"/>
        <end position="25"/>
    </location>
</feature>
<feature type="helix" evidence="49">
    <location>
        <begin position="26"/>
        <end position="29"/>
    </location>
</feature>
<feature type="helix" evidence="49">
    <location>
        <begin position="30"/>
        <end position="32"/>
    </location>
</feature>
<feature type="helix" evidence="49">
    <location>
        <begin position="38"/>
        <end position="41"/>
    </location>
</feature>
<feature type="turn" evidence="49">
    <location>
        <begin position="42"/>
        <end position="49"/>
    </location>
</feature>
<feature type="strand" evidence="48">
    <location>
        <begin position="52"/>
        <end position="55"/>
    </location>
</feature>
<feature type="turn" evidence="49">
    <location>
        <begin position="56"/>
        <end position="58"/>
    </location>
</feature>
<feature type="helix" evidence="49">
    <location>
        <begin position="61"/>
        <end position="72"/>
    </location>
</feature>
<feature type="helix" evidence="49">
    <location>
        <begin position="74"/>
        <end position="76"/>
    </location>
</feature>
<feature type="helix" evidence="49">
    <location>
        <begin position="81"/>
        <end position="83"/>
    </location>
</feature>
<feature type="strand" evidence="49">
    <location>
        <begin position="85"/>
        <end position="88"/>
    </location>
</feature>
<feature type="turn" evidence="49">
    <location>
        <begin position="90"/>
        <end position="92"/>
    </location>
</feature>
<feature type="helix" evidence="49">
    <location>
        <begin position="100"/>
        <end position="112"/>
    </location>
</feature>
<feature type="turn" evidence="50">
    <location>
        <begin position="113"/>
        <end position="118"/>
    </location>
</feature>
<feature type="helix" evidence="49">
    <location>
        <begin position="120"/>
        <end position="127"/>
    </location>
</feature>
<feature type="strand" evidence="48">
    <location>
        <begin position="131"/>
        <end position="133"/>
    </location>
</feature>
<feature type="turn" evidence="49">
    <location>
        <begin position="136"/>
        <end position="138"/>
    </location>
</feature>
<feature type="helix" evidence="49">
    <location>
        <begin position="141"/>
        <end position="143"/>
    </location>
</feature>
<reference key="1">
    <citation type="journal article" date="2011" name="Nature">
        <title>A high-resolution map of human evolutionary constraint using 29 mammals.</title>
        <authorList>
            <person name="Lindblad-Toh K."/>
            <person name="Garber M."/>
            <person name="Zuk O."/>
            <person name="Lin M.F."/>
            <person name="Parker B.J."/>
            <person name="Washietl S."/>
            <person name="Kheradpour P."/>
            <person name="Ernst J."/>
            <person name="Jordan G."/>
            <person name="Mauceli E."/>
            <person name="Ward L.D."/>
            <person name="Lowe C.B."/>
            <person name="Holloway A.K."/>
            <person name="Clamp M."/>
            <person name="Gnerre S."/>
            <person name="Alfoldi J."/>
            <person name="Beal K."/>
            <person name="Chang J."/>
            <person name="Clawson H."/>
            <person name="Cuff J."/>
            <person name="Di Palma F."/>
            <person name="Fitzgerald S."/>
            <person name="Flicek P."/>
            <person name="Guttman M."/>
            <person name="Hubisz M.J."/>
            <person name="Jaffe D.B."/>
            <person name="Jungreis I."/>
            <person name="Kent W.J."/>
            <person name="Kostka D."/>
            <person name="Lara M."/>
            <person name="Martins A.L."/>
            <person name="Massingham T."/>
            <person name="Moltke I."/>
            <person name="Raney B.J."/>
            <person name="Rasmussen M.D."/>
            <person name="Robinson J."/>
            <person name="Stark A."/>
            <person name="Vilella A.J."/>
            <person name="Wen J."/>
            <person name="Xie X."/>
            <person name="Zody M.C."/>
            <person name="Baldwin J."/>
            <person name="Bloom T."/>
            <person name="Chin C.W."/>
            <person name="Heiman D."/>
            <person name="Nicol R."/>
            <person name="Nusbaum C."/>
            <person name="Young S."/>
            <person name="Wilkinson J."/>
            <person name="Worley K.C."/>
            <person name="Kovar C.L."/>
            <person name="Muzny D.M."/>
            <person name="Gibbs R.A."/>
            <person name="Cree A."/>
            <person name="Dihn H.H."/>
            <person name="Fowler G."/>
            <person name="Jhangiani S."/>
            <person name="Joshi V."/>
            <person name="Lee S."/>
            <person name="Lewis L.R."/>
            <person name="Nazareth L.V."/>
            <person name="Okwuonu G."/>
            <person name="Santibanez J."/>
            <person name="Warren W.C."/>
            <person name="Mardis E.R."/>
            <person name="Weinstock G.M."/>
            <person name="Wilson R.K."/>
            <person name="Delehaunty K."/>
            <person name="Dooling D."/>
            <person name="Fronik C."/>
            <person name="Fulton L."/>
            <person name="Fulton B."/>
            <person name="Graves T."/>
            <person name="Minx P."/>
            <person name="Sodergren E."/>
            <person name="Birney E."/>
            <person name="Margulies E.H."/>
            <person name="Herrero J."/>
            <person name="Green E.D."/>
            <person name="Haussler D."/>
            <person name="Siepel A."/>
            <person name="Goldman N."/>
            <person name="Pollard K.S."/>
            <person name="Pedersen J.S."/>
            <person name="Lander E.S."/>
            <person name="Kellis M."/>
        </authorList>
    </citation>
    <scope>NUCLEOTIDE SEQUENCE [LARGE SCALE GENOMIC DNA]</scope>
    <source>
        <strain>Thorbecke</strain>
    </source>
</reference>
<reference evidence="19 20" key="2">
    <citation type="journal article" date="2015" name="Nature">
        <title>Structural basis for stop codon recognition in eukaryotes.</title>
        <authorList>
            <person name="Brown A."/>
            <person name="Shao S."/>
            <person name="Murray J."/>
            <person name="Hegde R.S."/>
            <person name="Ramakrishnan V."/>
        </authorList>
    </citation>
    <scope>STRUCTURE BY ELECTRON MICROSCOPY (3.45 ANGSTROMS) OF 6-142 OF RIBOSOME</scope>
    <scope>FUNCTION</scope>
    <scope>SUBCELLULAR LOCATION</scope>
    <scope>SUBUNIT</scope>
</reference>
<reference evidence="23 24" key="3">
    <citation type="journal article" date="2013" name="Nature">
        <title>The initiation of mammalian protein synthesis and mRNA scanning mechanism.</title>
        <authorList>
            <person name="Lomakin I.B."/>
            <person name="Steitz T.A."/>
        </authorList>
    </citation>
    <scope>X-RAY CRYSTALLOGRAPHY (7.01 ANGSTROMS) OF 40S RIBOSOME</scope>
    <scope>FUNCTION</scope>
    <scope>SUBUNIT</scope>
    <scope>SUBCELLULAR LOCATION</scope>
</reference>
<reference evidence="21 22" key="4">
    <citation type="journal article" date="2015" name="Mol. Cell">
        <title>Cryo-EM of ribosomal 80S complexes with termination factors reveals the translocated cricket paralysis virus IRES.</title>
        <authorList>
            <person name="Muhs M."/>
            <person name="Hilal T."/>
            <person name="Mielke T."/>
            <person name="Skabkin M.A."/>
            <person name="Sanbonmatsu K.Y."/>
            <person name="Pestova T.V."/>
            <person name="Spahn C.M."/>
        </authorList>
    </citation>
    <scope>STRUCTURE BY ELECTRON MICROSCOPY (9.00 ANGSTROMS) OF RIBOSOME</scope>
    <scope>FUNCTION</scope>
    <scope>SUBUNIT</scope>
    <scope>SUBCELLULAR LOCATION</scope>
</reference>
<reference evidence="25 26" key="5">
    <citation type="journal article" date="2016" name="Cell">
        <title>Decoding mammalian ribosome-mRNA states by translational GTPase complexes.</title>
        <authorList>
            <person name="Shao S."/>
            <person name="Murray J."/>
            <person name="Brown A."/>
            <person name="Taunton J."/>
            <person name="Ramakrishnan V."/>
            <person name="Hegde R.S."/>
        </authorList>
    </citation>
    <scope>STRUCTURE BY ELECTRON MICROSCOPY (3.31 ANGSTROMS) OF RIBOSOME</scope>
    <scope>FUNCTION</scope>
    <scope>SUBCELLULAR LOCATION</scope>
    <scope>SUBUNIT</scope>
</reference>
<reference evidence="29" key="6">
    <citation type="journal article" date="2018" name="Cell Rep.">
        <title>tRNA translocation by the eukaryotic 80S ribosome and the impact of GTP hydrolysis.</title>
        <authorList>
            <person name="Flis J."/>
            <person name="Holm M."/>
            <person name="Rundlet E.J."/>
            <person name="Loerke J."/>
            <person name="Hilal T."/>
            <person name="Dabrowski M."/>
            <person name="Burger J."/>
            <person name="Mielke T."/>
            <person name="Blanchard S.C."/>
            <person name="Spahn C.M.T."/>
            <person name="Budkevich T.V."/>
        </authorList>
    </citation>
    <scope>STRUCTURE BY ELECTRON MICROSCOPY (3.60 ANGSTROMS) OF 4-142 OF RIBOSOME</scope>
    <scope>FUNCTION</scope>
    <scope>SUBCELLULAR LOCATION</scope>
    <scope>SUBUNIT</scope>
</reference>
<reference evidence="27 28" key="7">
    <citation type="journal article" date="2018" name="Elife">
        <title>Dual tRNA mimicry in the Cricket paralysis virus IRES uncovers an unexpected similarity with the Hepatitis C Virus IRES.</title>
        <authorList>
            <person name="Pisareva V.P."/>
            <person name="Pisarev A.V."/>
            <person name="Fernandez I.S."/>
        </authorList>
    </citation>
    <scope>STRUCTURE BY ELECTRON MICROSCOPY (3.20 ANGSTROMS) OF RIBOSOME</scope>
    <scope>SUBCELLULAR LOCATION</scope>
    <scope>SUBUNIT</scope>
</reference>
<reference evidence="32 33" key="8">
    <citation type="journal article" date="2018" name="Elife">
        <title>Structures of translationally inactive mammalian ribosomes.</title>
        <authorList>
            <person name="Brown A."/>
            <person name="Baird M.R."/>
            <person name="Yip M.C."/>
            <person name="Murray J."/>
            <person name="Shao S."/>
        </authorList>
    </citation>
    <scope>STRUCTURE BY ELECTRON MICROSCOPY (3.30 ANGSTROMS) OF 2-145 OF RIBOSOME</scope>
    <scope>SUBCELLULAR LOCATION</scope>
    <scope>SUBUNIT</scope>
</reference>
<reference evidence="30 31" key="9">
    <citation type="journal article" date="2018" name="Mol. Cell">
        <title>ZNF598 is a quality control sensor of collided ribosomes.</title>
        <authorList>
            <person name="Juszkiewicz S."/>
            <person name="Chandrasekaran V."/>
            <person name="Lin Z."/>
            <person name="Kraatz S."/>
            <person name="Ramakrishnan V."/>
            <person name="Hegde R.S."/>
        </authorList>
    </citation>
    <scope>STRUCTURE BY ELECTRON MICROSCOPY (3.80 ANGSTROMS) OF RIBOSOME</scope>
    <scope>SUBCELLULAR LOCATION</scope>
    <scope>SUBUNIT</scope>
</reference>
<reference evidence="36 37" key="10">
    <citation type="journal article" date="2019" name="Elife">
        <title>Structural and mutational analysis of the ribosome-arresting human XBP1u.</title>
        <authorList>
            <person name="Shanmuganathan V."/>
            <person name="Schiller N."/>
            <person name="Magoulopoulou A."/>
            <person name="Cheng J."/>
            <person name="Braunger K."/>
            <person name="Cymer F."/>
            <person name="Berninghausen O."/>
            <person name="Beatrix B."/>
            <person name="Kohno K."/>
            <person name="von Heijne G."/>
            <person name="Beckmann R."/>
        </authorList>
    </citation>
    <scope>STRUCTURE BY ELECTRON MICROSCOPY (3.00 ANGSTROMS) OF 2-145 OF RIBOSOME</scope>
    <scope>SUBCELLULAR LOCATION</scope>
    <scope>SUBUNIT</scope>
</reference>
<reference evidence="34 35" key="11">
    <citation type="journal article" date="2019" name="EMBO J.">
        <title>The Israeli acute paralysis virus IRES captures host ribosomes by mimicking a ribosomal state with hybrid tRNAs.</title>
        <authorList>
            <person name="Acosta-Reyes F."/>
            <person name="Neupane R."/>
            <person name="Frank J."/>
            <person name="Fernandez I.S."/>
        </authorList>
    </citation>
    <scope>STRUCTURE BY ELECTRON MICROSCOPY (3.10 ANGSTROMS) OF RIBOSOME</scope>
    <scope>SUBUNIT</scope>
    <scope>SUBCELLULAR LOCATION</scope>
</reference>
<reference evidence="38" key="12">
    <citation type="journal article" date="2019" name="Nat. Struct. Mol. Biol.">
        <title>Mechanism of ribosome stalling during translation of a poly(A) tail.</title>
        <authorList>
            <person name="Chandrasekaran V."/>
            <person name="Juszkiewicz S."/>
            <person name="Choi J."/>
            <person name="Puglisi J.D."/>
            <person name="Brown A."/>
            <person name="Shao S."/>
            <person name="Ramakrishnan V."/>
            <person name="Hegde R.S."/>
        </authorList>
    </citation>
    <scope>STRUCTURE BY ELECTRON MICROSCOPY (2.80 ANGSTROMS) OF RIBOSOME</scope>
    <scope>SUBCELLULAR LOCATION</scope>
    <scope>SUBUNIT</scope>
</reference>
<reference evidence="41 42" key="13">
    <citation type="journal article" date="2020" name="Cell Rep.">
        <title>The Halastavi arva virus intergenic region IRES promotes translation by the simplest possible initiation mechanism.</title>
        <authorList>
            <person name="Abaeva I.S."/>
            <person name="Vicens Q."/>
            <person name="Bochler A."/>
            <person name="Soufari H."/>
            <person name="Simonetti A."/>
            <person name="Pestova T.V."/>
            <person name="Hashem Y."/>
            <person name="Hellen C.U.T."/>
        </authorList>
    </citation>
    <scope>STRUCTURE BY ELECTRON MICROSCOPY (3.49 ANGSTROMS) OF RIBOSOME</scope>
    <scope>SUBCELLULAR LOCATION</scope>
    <scope>SUBUNIT</scope>
</reference>
<reference evidence="39 40" key="14">
    <citation type="journal article" date="2020" name="Elife">
        <title>A complex IRES at the 5'-UTR of a viral mRNA assembles a functional 48S complex via an uAUG intermediate.</title>
        <authorList>
            <person name="Neupane R."/>
            <person name="Pisareva V.P."/>
            <person name="Rodriguez C.F."/>
            <person name="Pisarev A.V."/>
            <person name="Fernandez I.S."/>
        </authorList>
    </citation>
    <scope>STRUCTURE BY ELECTRON MICROSCOPY (3.00 ANGSTROMS) OF RIBOSOME</scope>
    <scope>SUBUNIT</scope>
    <scope>SUBCELLULAR LOCATION</scope>
</reference>
<reference evidence="44 45" key="15">
    <citation type="journal article" date="2022" name="EMBO J.">
        <title>Molecular architecture of 40S translation initiation complexes on the hepatitis C virus IRES.</title>
        <authorList>
            <person name="Brown Z.P."/>
            <person name="Abaeva I.S."/>
            <person name="De S."/>
            <person name="Hellen C.U.T."/>
            <person name="Pestova T.V."/>
            <person name="Frank J."/>
        </authorList>
    </citation>
    <scope>STRUCTURE BY ELECTRON MICROSCOPY (3.50 ANGSTROMS) OF RIBOSOME</scope>
    <scope>SUBCELLULAR LOCATION</scope>
    <scope>SUBUNIT</scope>
</reference>
<reference evidence="46 47" key="16">
    <citation type="journal article" date="2022" name="Mol. Cell">
        <title>Direct epitranscriptomic regulation of mammalian translation initiation through N4-acetylcytidine.</title>
        <authorList>
            <person name="Arango D."/>
            <person name="Sturgill D."/>
            <person name="Yang R."/>
            <person name="Kanai T."/>
            <person name="Bauer P."/>
            <person name="Roy J."/>
            <person name="Wang Z."/>
            <person name="Hosogane M."/>
            <person name="Schiffers S."/>
            <person name="Oberdoerffer S."/>
        </authorList>
    </citation>
    <scope>STRUCTURE BY ELECTRON MICROSCOPY (2.80 ANGSTROMS) OF RIBOSOME</scope>
    <scope>SUBCELLULAR LOCATION</scope>
    <scope>SUBUNIT</scope>
</reference>
<reference evidence="43" key="17">
    <citation type="journal article" date="2023" name="Nature">
        <title>A molecular network of conserved factors keeps ribosomes dormant in the egg.</title>
        <authorList>
            <person name="Leesch F."/>
            <person name="Lorenzo-Orts L."/>
            <person name="Pribitzer C."/>
            <person name="Grishkovskaya I."/>
            <person name="Roehsner J."/>
            <person name="Chugunova A."/>
            <person name="Matzinger M."/>
            <person name="Roitinger E."/>
            <person name="Belacic K."/>
            <person name="Kandolf S."/>
            <person name="Lin T.Y."/>
            <person name="Mechtler K."/>
            <person name="Meinhart A."/>
            <person name="Haselbach D."/>
            <person name="Pauli A."/>
        </authorList>
    </citation>
    <scope>STRUCTURE BY ELECTRON MICROSCOPY (2.30 ANGSTROMS) OF RIBOSOME</scope>
    <scope>SUBCELLULAR LOCATION</scope>
    <scope>SUBUNIT</scope>
</reference>
<evidence type="ECO:0000250" key="1">
    <source>
        <dbReference type="UniProtKB" id="P62269"/>
    </source>
</evidence>
<evidence type="ECO:0000269" key="2">
    <source>
    </source>
</evidence>
<evidence type="ECO:0000269" key="3">
    <source>
    </source>
</evidence>
<evidence type="ECO:0000269" key="4">
    <source>
    </source>
</evidence>
<evidence type="ECO:0000269" key="5">
    <source>
    </source>
</evidence>
<evidence type="ECO:0000269" key="6">
    <source>
    </source>
</evidence>
<evidence type="ECO:0000269" key="7">
    <source>
    </source>
</evidence>
<evidence type="ECO:0000269" key="8">
    <source>
    </source>
</evidence>
<evidence type="ECO:0000269" key="9">
    <source>
    </source>
</evidence>
<evidence type="ECO:0000269" key="10">
    <source>
    </source>
</evidence>
<evidence type="ECO:0000269" key="11">
    <source>
    </source>
</evidence>
<evidence type="ECO:0000269" key="12">
    <source>
    </source>
</evidence>
<evidence type="ECO:0000269" key="13">
    <source>
    </source>
</evidence>
<evidence type="ECO:0000269" key="14">
    <source>
    </source>
</evidence>
<evidence type="ECO:0000269" key="15">
    <source>
    </source>
</evidence>
<evidence type="ECO:0000269" key="16">
    <source>
    </source>
</evidence>
<evidence type="ECO:0000269" key="17">
    <source>
    </source>
</evidence>
<evidence type="ECO:0000305" key="18"/>
<evidence type="ECO:0007744" key="19">
    <source>
        <dbReference type="PDB" id="3JAG"/>
    </source>
</evidence>
<evidence type="ECO:0007744" key="20">
    <source>
        <dbReference type="PDB" id="3JAH"/>
    </source>
</evidence>
<evidence type="ECO:0007744" key="21">
    <source>
        <dbReference type="PDB" id="4D5L"/>
    </source>
</evidence>
<evidence type="ECO:0007744" key="22">
    <source>
        <dbReference type="PDB" id="4D61"/>
    </source>
</evidence>
<evidence type="ECO:0007744" key="23">
    <source>
        <dbReference type="PDB" id="4KZX"/>
    </source>
</evidence>
<evidence type="ECO:0007744" key="24">
    <source>
        <dbReference type="PDB" id="4KZY"/>
    </source>
</evidence>
<evidence type="ECO:0007744" key="25">
    <source>
        <dbReference type="PDB" id="5LZS"/>
    </source>
</evidence>
<evidence type="ECO:0007744" key="26">
    <source>
        <dbReference type="PDB" id="5LZT"/>
    </source>
</evidence>
<evidence type="ECO:0007744" key="27">
    <source>
        <dbReference type="PDB" id="6D90"/>
    </source>
</evidence>
<evidence type="ECO:0007744" key="28">
    <source>
        <dbReference type="PDB" id="6D9J"/>
    </source>
</evidence>
<evidence type="ECO:0007744" key="29">
    <source>
        <dbReference type="PDB" id="6GZ3"/>
    </source>
</evidence>
<evidence type="ECO:0007744" key="30">
    <source>
        <dbReference type="PDB" id="6HCF"/>
    </source>
</evidence>
<evidence type="ECO:0007744" key="31">
    <source>
        <dbReference type="PDB" id="6HCJ"/>
    </source>
</evidence>
<evidence type="ECO:0007744" key="32">
    <source>
        <dbReference type="PDB" id="6MTB"/>
    </source>
</evidence>
<evidence type="ECO:0007744" key="33">
    <source>
        <dbReference type="PDB" id="6MTC"/>
    </source>
</evidence>
<evidence type="ECO:0007744" key="34">
    <source>
        <dbReference type="PDB" id="6P4G"/>
    </source>
</evidence>
<evidence type="ECO:0007744" key="35">
    <source>
        <dbReference type="PDB" id="6P4H"/>
    </source>
</evidence>
<evidence type="ECO:0007744" key="36">
    <source>
        <dbReference type="PDB" id="6R5Q"/>
    </source>
</evidence>
<evidence type="ECO:0007744" key="37">
    <source>
        <dbReference type="PDB" id="6R6G"/>
    </source>
</evidence>
<evidence type="ECO:0007744" key="38">
    <source>
        <dbReference type="PDB" id="6SGC"/>
    </source>
</evidence>
<evidence type="ECO:0007744" key="39">
    <source>
        <dbReference type="PDB" id="6W2S"/>
    </source>
</evidence>
<evidence type="ECO:0007744" key="40">
    <source>
        <dbReference type="PDB" id="6W2T"/>
    </source>
</evidence>
<evidence type="ECO:0007744" key="41">
    <source>
        <dbReference type="PDB" id="6ZVK"/>
    </source>
</evidence>
<evidence type="ECO:0007744" key="42">
    <source>
        <dbReference type="PDB" id="7A01"/>
    </source>
</evidence>
<evidence type="ECO:0007744" key="43">
    <source>
        <dbReference type="PDB" id="7OYD"/>
    </source>
</evidence>
<evidence type="ECO:0007744" key="44">
    <source>
        <dbReference type="PDB" id="7SYI"/>
    </source>
</evidence>
<evidence type="ECO:0007744" key="45">
    <source>
        <dbReference type="PDB" id="7SYJ"/>
    </source>
</evidence>
<evidence type="ECO:0007744" key="46">
    <source>
        <dbReference type="PDB" id="7UCJ"/>
    </source>
</evidence>
<evidence type="ECO:0007744" key="47">
    <source>
        <dbReference type="PDB" id="7UCK"/>
    </source>
</evidence>
<evidence type="ECO:0007829" key="48">
    <source>
        <dbReference type="PDB" id="6YAL"/>
    </source>
</evidence>
<evidence type="ECO:0007829" key="49">
    <source>
        <dbReference type="PDB" id="7JQB"/>
    </source>
</evidence>
<evidence type="ECO:0007829" key="50">
    <source>
        <dbReference type="PDB" id="7JQC"/>
    </source>
</evidence>
<keyword id="KW-0002">3D-structure</keyword>
<keyword id="KW-0007">Acetylation</keyword>
<keyword id="KW-0963">Cytoplasm</keyword>
<keyword id="KW-1017">Isopeptide bond</keyword>
<keyword id="KW-1185">Reference proteome</keyword>
<keyword id="KW-0687">Ribonucleoprotein</keyword>
<keyword id="KW-0689">Ribosomal protein</keyword>
<keyword id="KW-0694">RNA-binding</keyword>
<keyword id="KW-0699">rRNA-binding</keyword>
<keyword id="KW-0832">Ubl conjugation</keyword>
<organism>
    <name type="scientific">Oryctolagus cuniculus</name>
    <name type="common">Rabbit</name>
    <dbReference type="NCBI Taxonomy" id="9986"/>
    <lineage>
        <taxon>Eukaryota</taxon>
        <taxon>Metazoa</taxon>
        <taxon>Chordata</taxon>
        <taxon>Craniata</taxon>
        <taxon>Vertebrata</taxon>
        <taxon>Euteleostomi</taxon>
        <taxon>Mammalia</taxon>
        <taxon>Eutheria</taxon>
        <taxon>Euarchontoglires</taxon>
        <taxon>Glires</taxon>
        <taxon>Lagomorpha</taxon>
        <taxon>Leporidae</taxon>
        <taxon>Oryctolagus</taxon>
    </lineage>
</organism>